<dbReference type="EMBL" id="AF378369">
    <property type="protein sequence ID" value="AAK56305.1"/>
    <property type="molecule type" value="Genomic_DNA"/>
</dbReference>
<dbReference type="EMBL" id="AJ296342">
    <property type="protein sequence ID" value="CAC44463.1"/>
    <property type="molecule type" value="Genomic_DNA"/>
</dbReference>
<dbReference type="EMBL" id="AY324086">
    <property type="protein sequence ID" value="AAP87081.1"/>
    <property type="molecule type" value="Genomic_DNA"/>
</dbReference>
<dbReference type="EMBL" id="CP000253">
    <property type="protein sequence ID" value="ABD30373.1"/>
    <property type="status" value="ALT_INIT"/>
    <property type="molecule type" value="Genomic_DNA"/>
</dbReference>
<dbReference type="RefSeq" id="WP_000073353.1">
    <property type="nucleotide sequence ID" value="NZ_LS483365.1"/>
</dbReference>
<dbReference type="RefSeq" id="WP_011447008.1">
    <property type="nucleotide sequence ID" value="NC_007795.1"/>
</dbReference>
<dbReference type="RefSeq" id="YP_499805.1">
    <property type="nucleotide sequence ID" value="NC_007795.1"/>
</dbReference>
<dbReference type="SMR" id="Q2FYZ9"/>
<dbReference type="STRING" id="93061.SAOUHSC_01272"/>
<dbReference type="PaxDb" id="1280-SAXN108_1300"/>
<dbReference type="GeneID" id="3919925"/>
<dbReference type="KEGG" id="sao:SAOUHSC_01272"/>
<dbReference type="PATRIC" id="fig|93061.5.peg.1166"/>
<dbReference type="eggNOG" id="COG0249">
    <property type="taxonomic scope" value="Bacteria"/>
</dbReference>
<dbReference type="HOGENOM" id="CLU_002472_3_2_9"/>
<dbReference type="OrthoDB" id="9802448at2"/>
<dbReference type="PRO" id="PR:Q2FYZ9"/>
<dbReference type="Proteomes" id="UP000008816">
    <property type="component" value="Chromosome"/>
</dbReference>
<dbReference type="GO" id="GO:0005829">
    <property type="term" value="C:cytosol"/>
    <property type="evidence" value="ECO:0000318"/>
    <property type="project" value="GO_Central"/>
</dbReference>
<dbReference type="GO" id="GO:0005524">
    <property type="term" value="F:ATP binding"/>
    <property type="evidence" value="ECO:0007669"/>
    <property type="project" value="UniProtKB-UniRule"/>
</dbReference>
<dbReference type="GO" id="GO:0140664">
    <property type="term" value="F:ATP-dependent DNA damage sensor activity"/>
    <property type="evidence" value="ECO:0007669"/>
    <property type="project" value="InterPro"/>
</dbReference>
<dbReference type="GO" id="GO:0003684">
    <property type="term" value="F:damaged DNA binding"/>
    <property type="evidence" value="ECO:0007669"/>
    <property type="project" value="UniProtKB-UniRule"/>
</dbReference>
<dbReference type="GO" id="GO:0030983">
    <property type="term" value="F:mismatched DNA binding"/>
    <property type="evidence" value="ECO:0000318"/>
    <property type="project" value="GO_Central"/>
</dbReference>
<dbReference type="GO" id="GO:0006298">
    <property type="term" value="P:mismatch repair"/>
    <property type="evidence" value="ECO:0000318"/>
    <property type="project" value="GO_Central"/>
</dbReference>
<dbReference type="CDD" id="cd03284">
    <property type="entry name" value="ABC_MutS1"/>
    <property type="match status" value="1"/>
</dbReference>
<dbReference type="FunFam" id="1.10.1420.10:FF:000007">
    <property type="entry name" value="DNA mismatch repair protein MutS"/>
    <property type="match status" value="1"/>
</dbReference>
<dbReference type="FunFam" id="3.40.1170.10:FF:000001">
    <property type="entry name" value="DNA mismatch repair protein MutS"/>
    <property type="match status" value="1"/>
</dbReference>
<dbReference type="FunFam" id="3.40.50.300:FF:000896">
    <property type="entry name" value="DNA mismatch repair protein MutS"/>
    <property type="match status" value="1"/>
</dbReference>
<dbReference type="Gene3D" id="1.10.1420.10">
    <property type="match status" value="2"/>
</dbReference>
<dbReference type="Gene3D" id="3.40.1170.10">
    <property type="entry name" value="DNA repair protein MutS, domain I"/>
    <property type="match status" value="1"/>
</dbReference>
<dbReference type="Gene3D" id="3.30.420.110">
    <property type="entry name" value="MutS, connector domain"/>
    <property type="match status" value="1"/>
</dbReference>
<dbReference type="Gene3D" id="3.40.50.300">
    <property type="entry name" value="P-loop containing nucleotide triphosphate hydrolases"/>
    <property type="match status" value="1"/>
</dbReference>
<dbReference type="HAMAP" id="MF_00096">
    <property type="entry name" value="MutS"/>
    <property type="match status" value="1"/>
</dbReference>
<dbReference type="InterPro" id="IPR005748">
    <property type="entry name" value="DNA_mismatch_repair_MutS"/>
</dbReference>
<dbReference type="InterPro" id="IPR007695">
    <property type="entry name" value="DNA_mismatch_repair_MutS-lik_N"/>
</dbReference>
<dbReference type="InterPro" id="IPR017261">
    <property type="entry name" value="DNA_mismatch_repair_MutS/MSH"/>
</dbReference>
<dbReference type="InterPro" id="IPR000432">
    <property type="entry name" value="DNA_mismatch_repair_MutS_C"/>
</dbReference>
<dbReference type="InterPro" id="IPR007861">
    <property type="entry name" value="DNA_mismatch_repair_MutS_clamp"/>
</dbReference>
<dbReference type="InterPro" id="IPR007696">
    <property type="entry name" value="DNA_mismatch_repair_MutS_core"/>
</dbReference>
<dbReference type="InterPro" id="IPR016151">
    <property type="entry name" value="DNA_mismatch_repair_MutS_N"/>
</dbReference>
<dbReference type="InterPro" id="IPR036187">
    <property type="entry name" value="DNA_mismatch_repair_MutS_sf"/>
</dbReference>
<dbReference type="InterPro" id="IPR007860">
    <property type="entry name" value="DNA_mmatch_repair_MutS_con_dom"/>
</dbReference>
<dbReference type="InterPro" id="IPR045076">
    <property type="entry name" value="MutS"/>
</dbReference>
<dbReference type="InterPro" id="IPR036678">
    <property type="entry name" value="MutS_con_dom_sf"/>
</dbReference>
<dbReference type="InterPro" id="IPR027417">
    <property type="entry name" value="P-loop_NTPase"/>
</dbReference>
<dbReference type="NCBIfam" id="TIGR01070">
    <property type="entry name" value="mutS1"/>
    <property type="match status" value="1"/>
</dbReference>
<dbReference type="NCBIfam" id="NF003810">
    <property type="entry name" value="PRK05399.1"/>
    <property type="match status" value="1"/>
</dbReference>
<dbReference type="PANTHER" id="PTHR11361:SF34">
    <property type="entry name" value="DNA MISMATCH REPAIR PROTEIN MSH1, MITOCHONDRIAL"/>
    <property type="match status" value="1"/>
</dbReference>
<dbReference type="PANTHER" id="PTHR11361">
    <property type="entry name" value="DNA MISMATCH REPAIR PROTEIN MUTS FAMILY MEMBER"/>
    <property type="match status" value="1"/>
</dbReference>
<dbReference type="Pfam" id="PF01624">
    <property type="entry name" value="MutS_I"/>
    <property type="match status" value="1"/>
</dbReference>
<dbReference type="Pfam" id="PF05188">
    <property type="entry name" value="MutS_II"/>
    <property type="match status" value="1"/>
</dbReference>
<dbReference type="Pfam" id="PF05192">
    <property type="entry name" value="MutS_III"/>
    <property type="match status" value="1"/>
</dbReference>
<dbReference type="Pfam" id="PF05190">
    <property type="entry name" value="MutS_IV"/>
    <property type="match status" value="1"/>
</dbReference>
<dbReference type="Pfam" id="PF00488">
    <property type="entry name" value="MutS_V"/>
    <property type="match status" value="1"/>
</dbReference>
<dbReference type="PIRSF" id="PIRSF037677">
    <property type="entry name" value="DNA_mis_repair_Msh6"/>
    <property type="match status" value="1"/>
</dbReference>
<dbReference type="SMART" id="SM00534">
    <property type="entry name" value="MUTSac"/>
    <property type="match status" value="1"/>
</dbReference>
<dbReference type="SMART" id="SM00533">
    <property type="entry name" value="MUTSd"/>
    <property type="match status" value="1"/>
</dbReference>
<dbReference type="SUPFAM" id="SSF55271">
    <property type="entry name" value="DNA repair protein MutS, domain I"/>
    <property type="match status" value="1"/>
</dbReference>
<dbReference type="SUPFAM" id="SSF53150">
    <property type="entry name" value="DNA repair protein MutS, domain II"/>
    <property type="match status" value="1"/>
</dbReference>
<dbReference type="SUPFAM" id="SSF48334">
    <property type="entry name" value="DNA repair protein MutS, domain III"/>
    <property type="match status" value="1"/>
</dbReference>
<dbReference type="SUPFAM" id="SSF52540">
    <property type="entry name" value="P-loop containing nucleoside triphosphate hydrolases"/>
    <property type="match status" value="1"/>
</dbReference>
<dbReference type="PROSITE" id="PS00486">
    <property type="entry name" value="DNA_MISMATCH_REPAIR_2"/>
    <property type="match status" value="1"/>
</dbReference>
<evidence type="ECO:0000250" key="1"/>
<evidence type="ECO:0000255" key="2"/>
<evidence type="ECO:0000305" key="3"/>
<feature type="chain" id="PRO_0000247941" description="DNA mismatch repair protein MutS">
    <location>
        <begin position="1"/>
        <end position="872"/>
    </location>
</feature>
<feature type="binding site" evidence="2">
    <location>
        <begin position="602"/>
        <end position="609"/>
    </location>
    <ligand>
        <name>ATP</name>
        <dbReference type="ChEBI" id="CHEBI:30616"/>
    </ligand>
</feature>
<keyword id="KW-0067">ATP-binding</keyword>
<keyword id="KW-0227">DNA damage</keyword>
<keyword id="KW-0234">DNA repair</keyword>
<keyword id="KW-0238">DNA-binding</keyword>
<keyword id="KW-0547">Nucleotide-binding</keyword>
<keyword id="KW-1185">Reference proteome</keyword>
<comment type="function">
    <text evidence="1">This protein is involved in the repair of mismatches in DNA. It is possible that it carries out the mismatch recognition step. This protein has a weak ATPase activity (By similarity).</text>
</comment>
<comment type="similarity">
    <text evidence="3">Belongs to the DNA mismatch repair MutS family.</text>
</comment>
<comment type="sequence caution" evidence="3">
    <conflict type="erroneous initiation">
        <sequence resource="EMBL-CDS" id="ABD30373"/>
    </conflict>
</comment>
<proteinExistence type="inferred from homology"/>
<sequence length="872" mass="99903">MSNVTPMMQQYLKIKSEYQDCLLFFRLGDFYEMFYEDAKEASRVLEITLTKRDAKKENPIPMCGVPYHSADSYIDTLVNNGYKVAICEQMEDPKQTKGMVRREVVRIVTPGTVMEQGGVDDKQNNYILSFVMNQPEIALSYCDVSTGELKVTHFNDEATLLNEITTINPNEVVINDNISDNLKRQINMVTETITVRETLSSEIYSVNQTEHKLMYQATQLLLDYIHHTQKRDLSHIEDVVQYAAIDYMKMDFYAKRNLELTESIRLKSKKGTLLWLMDETKTPMGARRLKQWIDRPLISKEQIEARLDIVDEFSAHFIERDTLRTYLNQVYDIERLVGRVSYGNVNARDLIQLKHSISEIPNIKALLNSMNQNTLVQVNQLEPLDDLLDILEQSLVEEPPISVKDGGLFKVGFNTQLDEYLEASKNGKTWLAELQAKERQRTGIKSLKISFNKVFGYFIEITRANLQNFEPSEFGYMRKQTLSNAERFITDELKEKEDIILGAEDKAIELEYQLFVQLREEVKKYTERLQQQAKIISELDCLQSFAEIAQKYNYTRPSFSENKTLELVESRHPVVERVMDYNDYVPNNCRLDNETFIYLITGPNMSGKSTYMRQVAIISIMAQMGAYVPCKEAVLPIFDQIFTRIGAADDLVSGKSTFMVEMLEAQKALTYATEDSLIIFDEIGRGTSTYDGLALAQAMIEYVAETSHAKTLFSTHYHELTTLDQALPSLKNVHVAANEYKGELIFLHKVKDGAVDDSYGIQVAKLADLPEKVISRAQVILSEFEASAGKKSSISNLKMVENEPEINQENLNLSVEETTDTLSQKDFEQASFDLFENDQKSEIELQIKNLNLSNMTPIEALVKLSELQNQLK</sequence>
<name>MUTS_STAA8</name>
<gene>
    <name type="primary">mutS</name>
    <name type="ordered locus">SAOUHSC_01272</name>
</gene>
<accession>Q2FYZ9</accession>
<accession>Q7WRG7</accession>
<accession>Q7WYI7</accession>
<accession>Q932P9</accession>
<protein>
    <recommendedName>
        <fullName>DNA mismatch repair protein MutS</fullName>
    </recommendedName>
</protein>
<organism>
    <name type="scientific">Staphylococcus aureus (strain NCTC 8325 / PS 47)</name>
    <dbReference type="NCBI Taxonomy" id="93061"/>
    <lineage>
        <taxon>Bacteria</taxon>
        <taxon>Bacillati</taxon>
        <taxon>Bacillota</taxon>
        <taxon>Bacilli</taxon>
        <taxon>Bacillales</taxon>
        <taxon>Staphylococcaceae</taxon>
        <taxon>Staphylococcus</taxon>
    </lineage>
</organism>
<reference key="1">
    <citation type="submission" date="2001-05" db="EMBL/GenBank/DDBJ databases">
        <title>Mismatch repair in Staphylococcus aureus.</title>
        <authorList>
            <person name="O'Neill A.J."/>
            <person name="Chopra I."/>
        </authorList>
    </citation>
    <scope>NUCLEOTIDE SEQUENCE [GENOMIC DNA]</scope>
</reference>
<reference key="2">
    <citation type="journal article" date="2002" name="Antimicrob. Agents Chemother.">
        <title>An elevated mutation frequency favors development of vancomycin resistance in Staphylococcus aureus.</title>
        <authorList>
            <person name="Schaaff F."/>
            <person name="Reipert A."/>
            <person name="Bierbaum G."/>
        </authorList>
    </citation>
    <scope>NUCLEOTIDE SEQUENCE [GENOMIC DNA]</scope>
</reference>
<reference key="3">
    <citation type="submission" date="2003-06" db="EMBL/GenBank/DDBJ databases">
        <title>Intact mutS gene in laboratory-derived and clinical glycopeptide-intermediate Staphylococcus aureus strains.</title>
        <authorList>
            <person name="Muthaiyan A."/>
            <person name="Jayaswal R.K."/>
            <person name="Wilkinson B.J."/>
        </authorList>
    </citation>
    <scope>NUCLEOTIDE SEQUENCE [GENOMIC DNA]</scope>
</reference>
<reference key="4">
    <citation type="book" date="2006" name="Gram positive pathogens, 2nd edition">
        <title>The Staphylococcus aureus NCTC 8325 genome.</title>
        <editorList>
            <person name="Fischetti V."/>
            <person name="Novick R."/>
            <person name="Ferretti J."/>
            <person name="Portnoy D."/>
            <person name="Rood J."/>
        </editorList>
        <authorList>
            <person name="Gillaspy A.F."/>
            <person name="Worrell V."/>
            <person name="Orvis J."/>
            <person name="Roe B.A."/>
            <person name="Dyer D.W."/>
            <person name="Iandolo J.J."/>
        </authorList>
    </citation>
    <scope>NUCLEOTIDE SEQUENCE [LARGE SCALE GENOMIC DNA]</scope>
    <source>
        <strain>NCTC 8325 / PS 47</strain>
    </source>
</reference>